<protein>
    <recommendedName>
        <fullName>Uncharacterized protein C03B1.4</fullName>
    </recommendedName>
</protein>
<organism>
    <name type="scientific">Caenorhabditis elegans</name>
    <dbReference type="NCBI Taxonomy" id="6239"/>
    <lineage>
        <taxon>Eukaryota</taxon>
        <taxon>Metazoa</taxon>
        <taxon>Ecdysozoa</taxon>
        <taxon>Nematoda</taxon>
        <taxon>Chromadorea</taxon>
        <taxon>Rhabditida</taxon>
        <taxon>Rhabditina</taxon>
        <taxon>Rhabditomorpha</taxon>
        <taxon>Rhabditoidea</taxon>
        <taxon>Rhabditidae</taxon>
        <taxon>Peloderinae</taxon>
        <taxon>Caenorhabditis</taxon>
    </lineage>
</organism>
<dbReference type="EMBL" id="FO080304">
    <property type="protein sequence ID" value="CCD62740.1"/>
    <property type="molecule type" value="Genomic_DNA"/>
</dbReference>
<dbReference type="PIR" id="T15385">
    <property type="entry name" value="T15385"/>
</dbReference>
<dbReference type="RefSeq" id="NP_509068.1">
    <property type="nucleotide sequence ID" value="NM_076667.1"/>
</dbReference>
<dbReference type="SMR" id="Q11111"/>
<dbReference type="FunCoup" id="Q11111">
    <property type="interactions" value="813"/>
</dbReference>
<dbReference type="STRING" id="6239.C03B1.4.1"/>
<dbReference type="PaxDb" id="6239-C03B1.4"/>
<dbReference type="EnsemblMetazoa" id="C03B1.4.1">
    <property type="protein sequence ID" value="C03B1.4.1"/>
    <property type="gene ID" value="WBGene00015375"/>
</dbReference>
<dbReference type="GeneID" id="182147"/>
<dbReference type="KEGG" id="cel:CELE_C03B1.4"/>
<dbReference type="UCSC" id="C03B1.4">
    <property type="organism name" value="c. elegans"/>
</dbReference>
<dbReference type="AGR" id="WB:WBGene00015375"/>
<dbReference type="CTD" id="182147"/>
<dbReference type="WormBase" id="C03B1.4">
    <property type="protein sequence ID" value="CE03906"/>
    <property type="gene ID" value="WBGene00015375"/>
</dbReference>
<dbReference type="eggNOG" id="ENOG502TKW7">
    <property type="taxonomic scope" value="Eukaryota"/>
</dbReference>
<dbReference type="HOGENOM" id="CLU_093961_0_0_1"/>
<dbReference type="InParanoid" id="Q11111"/>
<dbReference type="OMA" id="WINGYFL"/>
<dbReference type="OrthoDB" id="5780911at2759"/>
<dbReference type="PRO" id="PR:Q11111"/>
<dbReference type="Proteomes" id="UP000001940">
    <property type="component" value="Chromosome X"/>
</dbReference>
<dbReference type="Bgee" id="WBGene00015375">
    <property type="expression patterns" value="Expressed in larva"/>
</dbReference>
<proteinExistence type="predicted"/>
<gene>
    <name type="ORF">C03B1.4</name>
</gene>
<reference key="1">
    <citation type="journal article" date="1998" name="Science">
        <title>Genome sequence of the nematode C. elegans: a platform for investigating biology.</title>
        <authorList>
            <consortium name="The C. elegans sequencing consortium"/>
        </authorList>
    </citation>
    <scope>NUCLEOTIDE SEQUENCE [LARGE SCALE GENOMIC DNA]</scope>
    <source>
        <strain>Bristol N2</strain>
    </source>
</reference>
<sequence length="253" mass="29856">MSLPDSETLMKTVLEKYPDATDLKEDIDVHMEEFKAFEYRFKLTNVVLRALTLPIPKLEDESEVVFEGRSITYHWTFWTGDDEKKIVSWVNYSPKPIAIQTLKNKSSHRKKDITYSQYIDIKGTVEPGFVVPKNYFVPHPDPDLQPEDAVVHYQILTSMKDSIEDMPHLMSETKLDCEMYIKDRFEELLQEYQESKNTYYLARADFYRKLKFEHLDLDHQLLISAANRDWIDGYFLEKELRASYSLKIDSLAC</sequence>
<name>YX04_CAEEL</name>
<feature type="chain" id="PRO_0000065119" description="Uncharacterized protein C03B1.4">
    <location>
        <begin position="1"/>
        <end position="253"/>
    </location>
</feature>
<keyword id="KW-1185">Reference proteome</keyword>
<accession>Q11111</accession>